<feature type="chain" id="PRO_0000078838" description="Polymerase basic protein 2">
    <location>
        <begin position="1"/>
        <end position="759"/>
    </location>
</feature>
<feature type="short sequence motif" description="Nuclear localization signal" evidence="1">
    <location>
        <begin position="736"/>
        <end position="739"/>
    </location>
</feature>
<feature type="site" description="Avian adaptation" evidence="1">
    <location>
        <position position="627"/>
    </location>
</feature>
<feature type="sequence conflict" description="In Ref. 2; ABB21829." ref="2">
    <original>K</original>
    <variation>R</variation>
    <location>
        <position position="251"/>
    </location>
</feature>
<keyword id="KW-1157">Cap snatching</keyword>
<keyword id="KW-1262">Eukaryotic host gene expression shutoff by virus</keyword>
<keyword id="KW-1191">Eukaryotic host transcription shutoff by virus</keyword>
<keyword id="KW-1190">Host gene expression shutoff by virus</keyword>
<keyword id="KW-1048">Host nucleus</keyword>
<keyword id="KW-0945">Host-virus interaction</keyword>
<keyword id="KW-1104">Inhibition of host RNA polymerase II by virus</keyword>
<keyword id="KW-0506">mRNA capping</keyword>
<keyword id="KW-0507">mRNA processing</keyword>
<keyword id="KW-1195">Viral transcription</keyword>
<keyword id="KW-0946">Virion</keyword>
<organism>
    <name type="scientific">Influenza A virus (strain A/Turkey/Minnesota/833/1980 H4N2)</name>
    <dbReference type="NCBI Taxonomy" id="383603"/>
    <lineage>
        <taxon>Viruses</taxon>
        <taxon>Riboviria</taxon>
        <taxon>Orthornavirae</taxon>
        <taxon>Negarnaviricota</taxon>
        <taxon>Polyploviricotina</taxon>
        <taxon>Insthoviricetes</taxon>
        <taxon>Articulavirales</taxon>
        <taxon>Orthomyxoviridae</taxon>
        <taxon>Alphainfluenzavirus</taxon>
        <taxon>Alphainfluenzavirus influenzae</taxon>
        <taxon>Influenza A virus</taxon>
    </lineage>
</organism>
<name>PB2_I80A8</name>
<sequence>MERIKELRDLMSQSRTREILTKTTVDHMAIIKKYTSGRQEKNPALRMKWMMAMKYPITADKRIMEMIPERNEQGQTLWSKTNDAGSDRVMVSPLAVTWWNRNGPTTSTVHYPKVYKTYFEKVERLKHGTFGPVHFRNQVKIRRRVDINPGHADLSAKEAQDVIMEVVFPNEVGARILTSESQLTITKEKKEELQDCKIAPLMVAYMLERELVRKTRFLPVAGGTSSVYIEVLHLTQGTCWEQMYTPGGEVKNDDVDQSLIIAARNIVRRATVSADPLASLLEMCHSTQIGGIRMVDILRQNPTEEQAVDICKAAMGLRISSSFSFGGFTFKRTSGSSVKREEEVLTGNLQTLKIRVNEGYEEFTMVGRRATAILRKATRRLIQLIVSGRDEQSIAEAIIVAMVFSQEDCMIKAVRGDLNFVNRANQRLNPMHQLLRHFQKDAKVLFQNWGIEPIDNVMGMIGIMPDMTPSTEMSLRGIRVSKMGVDEYSSTERVVVSIDRFLRVRDQRGNVLLSPEEVSETQGTEKLTITYSSSMMWEINGPESVLVNTYQWIIRNWETVKIQWSQDPTMLYNKMEFEPFQSLVPKAARGQYSGFVRTLFQQMRDVLGTFDTVQIIKLLPFAAAPPEQSRMQFSSLTVNVRGSGMRILVRGNSPVFNYNKATKRLTVLGKDAGALTEDPDEGTAGVESAVLRGFLILGKEDKRYGPALSINELSNLAKGEKANVLIGQGDVVLVMKRKRDSSILTDSQTATKRIRMAIN</sequence>
<comment type="function">
    <text evidence="1">Plays an essential role in transcription initiation and cap-stealing mechanism, in which cellular capped pre-mRNAs are used to generate primers for viral transcription. Recognizes and binds the 7-methylguanosine-containing cap of the target pre-RNA which is subsequently cleaved after 10-13 nucleotides by the viral protein PA. Plays a role in the initiation of the viral genome replication and modulates the activity of the ribonucleoprotein (RNP) complex.</text>
</comment>
<comment type="subunit">
    <text evidence="1">Influenza RNA polymerase is composed of three subunits: PB1, PB2 and PA. Interacts (via N-terminus) with PB1 (via C-terminus). Interacts with nucleoprotein NP (via N-terminus).</text>
</comment>
<comment type="subcellular location">
    <subcellularLocation>
        <location evidence="1">Virion</location>
    </subcellularLocation>
    <subcellularLocation>
        <location evidence="1">Host nucleus</location>
    </subcellularLocation>
</comment>
<comment type="similarity">
    <text evidence="1">Belongs to the influenza viruses PB2 family.</text>
</comment>
<organismHost>
    <name type="scientific">Aves</name>
    <dbReference type="NCBI Taxonomy" id="8782"/>
</organismHost>
<gene>
    <name evidence="1" type="primary">PB2</name>
</gene>
<reference key="1">
    <citation type="journal article" date="1990" name="J. Virol.">
        <title>Evolution of influenza A virus PB2 genes: implications for evolution of the ribonucleoprotein complex and origin of human influenza A virus.</title>
        <authorList>
            <person name="Gorman O.T."/>
            <person name="Donis R.O."/>
            <person name="Kawaoka Y."/>
            <person name="Webster R.G."/>
        </authorList>
    </citation>
    <scope>NUCLEOTIDE SEQUENCE [GENOMIC RNA]</scope>
</reference>
<reference key="2">
    <citation type="journal article" date="2006" name="Science">
        <title>Large-scale sequence analysis of avian influenza isolates.</title>
        <authorList>
            <person name="Obenauer J.C."/>
            <person name="Denson J."/>
            <person name="Mehta P.K."/>
            <person name="Su X."/>
            <person name="Mukatira S."/>
            <person name="Finkelstein D.B."/>
            <person name="Xu X."/>
            <person name="Wang J."/>
            <person name="Ma J."/>
            <person name="Fan Y."/>
            <person name="Rakestraw K.M."/>
            <person name="Webster R.G."/>
            <person name="Hoffmann E."/>
            <person name="Krauss S."/>
            <person name="Zheng J."/>
            <person name="Zhang Z."/>
            <person name="Naeve C.W."/>
        </authorList>
    </citation>
    <scope>NUCLEOTIDE SEQUENCE [GENOMIC RNA]</scope>
</reference>
<accession>P26112</accession>
<accession>Q20NN3</accession>
<dbReference type="EMBL" id="M73514">
    <property type="protein sequence ID" value="AAA43134.1"/>
    <property type="molecule type" value="Genomic_RNA"/>
</dbReference>
<dbReference type="EMBL" id="CY005913">
    <property type="protein sequence ID" value="ABB21829.1"/>
    <property type="molecule type" value="Genomic_RNA"/>
</dbReference>
<dbReference type="SMR" id="P26112"/>
<dbReference type="PRO" id="PR:P26112"/>
<dbReference type="Proteomes" id="UP000008579">
    <property type="component" value="Genome"/>
</dbReference>
<dbReference type="GO" id="GO:0042025">
    <property type="term" value="C:host cell nucleus"/>
    <property type="evidence" value="ECO:0007669"/>
    <property type="project" value="UniProtKB-SubCell"/>
</dbReference>
<dbReference type="GO" id="GO:0044423">
    <property type="term" value="C:virion component"/>
    <property type="evidence" value="ECO:0007669"/>
    <property type="project" value="UniProtKB-UniRule"/>
</dbReference>
<dbReference type="GO" id="GO:0003723">
    <property type="term" value="F:RNA binding"/>
    <property type="evidence" value="ECO:0007669"/>
    <property type="project" value="UniProtKB-UniRule"/>
</dbReference>
<dbReference type="GO" id="GO:0003968">
    <property type="term" value="F:RNA-directed RNA polymerase activity"/>
    <property type="evidence" value="ECO:0007669"/>
    <property type="project" value="UniProtKB-UniRule"/>
</dbReference>
<dbReference type="GO" id="GO:0006370">
    <property type="term" value="P:7-methylguanosine mRNA capping"/>
    <property type="evidence" value="ECO:0007669"/>
    <property type="project" value="UniProtKB-UniRule"/>
</dbReference>
<dbReference type="GO" id="GO:0075526">
    <property type="term" value="P:cap snatching"/>
    <property type="evidence" value="ECO:0007669"/>
    <property type="project" value="UniProtKB-UniRule"/>
</dbReference>
<dbReference type="GO" id="GO:0006351">
    <property type="term" value="P:DNA-templated transcription"/>
    <property type="evidence" value="ECO:0007669"/>
    <property type="project" value="UniProtKB-UniRule"/>
</dbReference>
<dbReference type="GO" id="GO:0039657">
    <property type="term" value="P:symbiont-mediated suppression of host gene expression"/>
    <property type="evidence" value="ECO:0007669"/>
    <property type="project" value="UniProtKB-KW"/>
</dbReference>
<dbReference type="GO" id="GO:0039523">
    <property type="term" value="P:symbiont-mediated suppression of host mRNA transcription via inhibition of RNA polymerase II activity"/>
    <property type="evidence" value="ECO:0007669"/>
    <property type="project" value="UniProtKB-UniRule"/>
</dbReference>
<dbReference type="GO" id="GO:0039694">
    <property type="term" value="P:viral RNA genome replication"/>
    <property type="evidence" value="ECO:0007669"/>
    <property type="project" value="InterPro"/>
</dbReference>
<dbReference type="FunFam" id="3.30.30.90:FF:000001">
    <property type="entry name" value="Polymerase basic protein 2"/>
    <property type="match status" value="1"/>
</dbReference>
<dbReference type="Gene3D" id="3.30.30.90">
    <property type="entry name" value="Polymerase Basic Protein 2, C-terminal domain"/>
    <property type="match status" value="1"/>
</dbReference>
<dbReference type="HAMAP" id="MF_04062">
    <property type="entry name" value="INV_PB2"/>
    <property type="match status" value="1"/>
</dbReference>
<dbReference type="InterPro" id="IPR049110">
    <property type="entry name" value="Flu_PB2_2nd"/>
</dbReference>
<dbReference type="InterPro" id="IPR049114">
    <property type="entry name" value="Flu_PB2_6th"/>
</dbReference>
<dbReference type="InterPro" id="IPR049115">
    <property type="entry name" value="Flu_PB2_C"/>
</dbReference>
<dbReference type="InterPro" id="IPR048298">
    <property type="entry name" value="Flu_PB2_CAP-bd"/>
</dbReference>
<dbReference type="InterPro" id="IPR049111">
    <property type="entry name" value="Flu_PB2_middle"/>
</dbReference>
<dbReference type="InterPro" id="IPR049106">
    <property type="entry name" value="Flu_PB2_N"/>
</dbReference>
<dbReference type="InterPro" id="IPR001591">
    <property type="entry name" value="INV_PB2"/>
</dbReference>
<dbReference type="InterPro" id="IPR049113">
    <property type="entry name" value="PB2_helical"/>
</dbReference>
<dbReference type="InterPro" id="IPR037258">
    <property type="entry name" value="PDB2_C"/>
</dbReference>
<dbReference type="Pfam" id="PF20947">
    <property type="entry name" value="Flu_PB2_1st"/>
    <property type="match status" value="1"/>
</dbReference>
<dbReference type="Pfam" id="PF20948">
    <property type="entry name" value="Flu_PB2_2nd"/>
    <property type="match status" value="1"/>
</dbReference>
<dbReference type="Pfam" id="PF20949">
    <property type="entry name" value="Flu_PB2_3rd"/>
    <property type="match status" value="1"/>
</dbReference>
<dbReference type="Pfam" id="PF20950">
    <property type="entry name" value="Flu_PB2_4th"/>
    <property type="match status" value="1"/>
</dbReference>
<dbReference type="Pfam" id="PF00604">
    <property type="entry name" value="Flu_PB2_5th"/>
    <property type="match status" value="1"/>
</dbReference>
<dbReference type="Pfam" id="PF20951">
    <property type="entry name" value="Flu_PB2_6th"/>
    <property type="match status" value="1"/>
</dbReference>
<dbReference type="Pfam" id="PF20952">
    <property type="entry name" value="Flu_PB2_7th"/>
    <property type="match status" value="1"/>
</dbReference>
<dbReference type="SUPFAM" id="SSF160453">
    <property type="entry name" value="PB2 C-terminal domain-like"/>
    <property type="match status" value="1"/>
</dbReference>
<evidence type="ECO:0000255" key="1">
    <source>
        <dbReference type="HAMAP-Rule" id="MF_04062"/>
    </source>
</evidence>
<protein>
    <recommendedName>
        <fullName evidence="1">Polymerase basic protein 2</fullName>
    </recommendedName>
    <alternativeName>
        <fullName evidence="1">RNA-directed RNA polymerase subunit P3</fullName>
    </alternativeName>
</protein>
<proteinExistence type="inferred from homology"/>